<organism evidence="6">
    <name type="scientific">Stutzerimonas stutzeri</name>
    <name type="common">Pseudomonas stutzeri</name>
    <dbReference type="NCBI Taxonomy" id="316"/>
    <lineage>
        <taxon>Bacteria</taxon>
        <taxon>Pseudomonadati</taxon>
        <taxon>Pseudomonadota</taxon>
        <taxon>Gammaproteobacteria</taxon>
        <taxon>Pseudomonadales</taxon>
        <taxon>Pseudomonadaceae</taxon>
        <taxon>Stutzerimonas</taxon>
    </lineage>
</organism>
<comment type="function">
    <text evidence="2 4">Probably forms part of a binding-protein-dependent phosphite transporter. Probably responsible for the translocation of the substrate across the membrane.</text>
</comment>
<comment type="subcellular location">
    <subcellularLocation>
        <location evidence="1">Cell inner membrane</location>
        <topology evidence="3">Multi-pass membrane protein</topology>
    </subcellularLocation>
</comment>
<comment type="similarity">
    <text evidence="5">Belongs to the binding-protein-dependent transport system permease family.</text>
</comment>
<proteinExistence type="inferred from homology"/>
<gene>
    <name type="primary">ptxC</name>
</gene>
<protein>
    <recommendedName>
        <fullName>Phosphite transport system permease protein PtxC</fullName>
    </recommendedName>
</protein>
<accession>O69053</accession>
<name>PTXC_STUST</name>
<keyword id="KW-0997">Cell inner membrane</keyword>
<keyword id="KW-1003">Cell membrane</keyword>
<keyword id="KW-0472">Membrane</keyword>
<keyword id="KW-0812">Transmembrane</keyword>
<keyword id="KW-1133">Transmembrane helix</keyword>
<keyword id="KW-0813">Transport</keyword>
<feature type="chain" id="PRO_0000060221" description="Phosphite transport system permease protein PtxC">
    <location>
        <begin position="1"/>
        <end position="275"/>
    </location>
</feature>
<feature type="transmembrane region" description="Helical" evidence="3">
    <location>
        <begin position="30"/>
        <end position="50"/>
    </location>
</feature>
<feature type="transmembrane region" description="Helical" evidence="3">
    <location>
        <begin position="88"/>
        <end position="108"/>
    </location>
</feature>
<feature type="transmembrane region" description="Helical" evidence="3">
    <location>
        <begin position="136"/>
        <end position="156"/>
    </location>
</feature>
<feature type="transmembrane region" description="Helical" evidence="3">
    <location>
        <begin position="221"/>
        <end position="241"/>
    </location>
</feature>
<feature type="transmembrane region" description="Helical" evidence="3">
    <location>
        <begin position="249"/>
        <end position="269"/>
    </location>
</feature>
<feature type="domain" description="ABC transmembrane type-1" evidence="3">
    <location>
        <begin position="84"/>
        <end position="267"/>
    </location>
</feature>
<reference evidence="6" key="1">
    <citation type="journal article" date="1998" name="J. Bacteriol.">
        <title>Molecular genetic analysis of phosphite and hypophosphite oxidation by Pseudomonas stutzeri WM88.</title>
        <authorList>
            <person name="Metcalf W.W."/>
            <person name="Wolfe R.S."/>
        </authorList>
    </citation>
    <scope>NUCLEOTIDE SEQUENCE [GENOMIC DNA]</scope>
    <source>
        <strain>WM88</strain>
    </source>
</reference>
<evidence type="ECO:0000250" key="1"/>
<evidence type="ECO:0000250" key="2">
    <source>
        <dbReference type="UniProtKB" id="P16683"/>
    </source>
</evidence>
<evidence type="ECO:0000255" key="3">
    <source>
        <dbReference type="PROSITE-ProRule" id="PRU00441"/>
    </source>
</evidence>
<evidence type="ECO:0000303" key="4">
    <source>
    </source>
</evidence>
<evidence type="ECO:0000305" key="5"/>
<evidence type="ECO:0000312" key="6">
    <source>
        <dbReference type="EMBL" id="AAC71708.1"/>
    </source>
</evidence>
<sequence length="275" mass="29396">MSSHYDVQALPAEQREHILRGFGLGWWRQLGQVAIVFGVVLLACWYVGLLDATTLLNGLPSIATLAGEAMPPDFSGYRSWIRPLIDTLAMSIAGTAIAVVFSLVVAFVAARNTAPHPLVFGVARVLLNALRSVPELIMGIIFVAAVGFGALPGVLALGLHSVGMVGKFFAEAIEHVDEAPVEAARAAGATPMQVLLHAVLPQVTPQFADVAIYRWEYNFRASTVMGMVGAGGIGFELMGSLRIMQYQEVAAILLVILAMVTLVDAFSGVLRKHFK</sequence>
<dbReference type="EMBL" id="AF061070">
    <property type="protein sequence ID" value="AAC71708.1"/>
    <property type="molecule type" value="Genomic_DNA"/>
</dbReference>
<dbReference type="SMR" id="O69053"/>
<dbReference type="OrthoDB" id="9808005at2"/>
<dbReference type="GO" id="GO:0005886">
    <property type="term" value="C:plasma membrane"/>
    <property type="evidence" value="ECO:0007669"/>
    <property type="project" value="UniProtKB-SubCell"/>
</dbReference>
<dbReference type="GO" id="GO:0015416">
    <property type="term" value="F:ABC-type phosphonate transporter activity"/>
    <property type="evidence" value="ECO:0007669"/>
    <property type="project" value="InterPro"/>
</dbReference>
<dbReference type="CDD" id="cd06261">
    <property type="entry name" value="TM_PBP2"/>
    <property type="match status" value="1"/>
</dbReference>
<dbReference type="Gene3D" id="1.10.3720.10">
    <property type="entry name" value="MetI-like"/>
    <property type="match status" value="1"/>
</dbReference>
<dbReference type="InterPro" id="IPR000515">
    <property type="entry name" value="MetI-like"/>
</dbReference>
<dbReference type="InterPro" id="IPR035906">
    <property type="entry name" value="MetI-like_sf"/>
</dbReference>
<dbReference type="InterPro" id="IPR005769">
    <property type="entry name" value="PhnE/PtxC"/>
</dbReference>
<dbReference type="NCBIfam" id="TIGR01097">
    <property type="entry name" value="PhnE"/>
    <property type="match status" value="1"/>
</dbReference>
<dbReference type="PANTHER" id="PTHR30043:SF1">
    <property type="entry name" value="ABC TRANSPORT SYSTEM PERMEASE PROTEIN P69"/>
    <property type="match status" value="1"/>
</dbReference>
<dbReference type="PANTHER" id="PTHR30043">
    <property type="entry name" value="PHOSPHONATES TRANSPORT SYSTEM PERMEASE PROTEIN"/>
    <property type="match status" value="1"/>
</dbReference>
<dbReference type="Pfam" id="PF00528">
    <property type="entry name" value="BPD_transp_1"/>
    <property type="match status" value="1"/>
</dbReference>
<dbReference type="SUPFAM" id="SSF161098">
    <property type="entry name" value="MetI-like"/>
    <property type="match status" value="1"/>
</dbReference>
<dbReference type="PROSITE" id="PS50928">
    <property type="entry name" value="ABC_TM1"/>
    <property type="match status" value="1"/>
</dbReference>